<name>RL22_METMJ</name>
<accession>A3CT02</accession>
<feature type="chain" id="PRO_1000052607" description="Large ribosomal subunit protein uL22">
    <location>
        <begin position="1"/>
        <end position="153"/>
    </location>
</feature>
<reference key="1">
    <citation type="journal article" date="2009" name="Stand. Genomic Sci.">
        <title>Complete genome sequence of Methanoculleus marisnigri Romesser et al. 1981 type strain JR1.</title>
        <authorList>
            <person name="Anderson I.J."/>
            <person name="Sieprawska-Lupa M."/>
            <person name="Lapidus A."/>
            <person name="Nolan M."/>
            <person name="Copeland A."/>
            <person name="Glavina Del Rio T."/>
            <person name="Tice H."/>
            <person name="Dalin E."/>
            <person name="Barry K."/>
            <person name="Saunders E."/>
            <person name="Han C."/>
            <person name="Brettin T."/>
            <person name="Detter J.C."/>
            <person name="Bruce D."/>
            <person name="Mikhailova N."/>
            <person name="Pitluck S."/>
            <person name="Hauser L."/>
            <person name="Land M."/>
            <person name="Lucas S."/>
            <person name="Richardson P."/>
            <person name="Whitman W.B."/>
            <person name="Kyrpides N.C."/>
        </authorList>
    </citation>
    <scope>NUCLEOTIDE SEQUENCE [LARGE SCALE GENOMIC DNA]</scope>
    <source>
        <strain>ATCC 35101 / DSM 1498 / JR1</strain>
    </source>
</reference>
<gene>
    <name evidence="1" type="primary">rpl22</name>
    <name type="ordered locus">Memar_0569</name>
</gene>
<organism>
    <name type="scientific">Methanoculleus marisnigri (strain ATCC 35101 / DSM 1498 / JR1)</name>
    <dbReference type="NCBI Taxonomy" id="368407"/>
    <lineage>
        <taxon>Archaea</taxon>
        <taxon>Methanobacteriati</taxon>
        <taxon>Methanobacteriota</taxon>
        <taxon>Stenosarchaea group</taxon>
        <taxon>Methanomicrobia</taxon>
        <taxon>Methanomicrobiales</taxon>
        <taxon>Methanomicrobiaceae</taxon>
        <taxon>Methanoculleus</taxon>
    </lineage>
</organism>
<comment type="function">
    <text evidence="1">This protein binds specifically to 23S rRNA. It makes multiple contacts with different domains of the 23S rRNA in the assembled 50S subunit and ribosome.</text>
</comment>
<comment type="function">
    <text evidence="1">The globular domain of the protein is located near the polypeptide exit tunnel on the outside of the subunit, while an extended beta-hairpin is found that lines the wall of the exit tunnel in the center of the 70S ribosome.</text>
</comment>
<comment type="subunit">
    <text evidence="1">Part of the 50S ribosomal subunit.</text>
</comment>
<comment type="similarity">
    <text evidence="1">Belongs to the universal ribosomal protein uL22 family.</text>
</comment>
<evidence type="ECO:0000255" key="1">
    <source>
        <dbReference type="HAMAP-Rule" id="MF_01331"/>
    </source>
</evidence>
<evidence type="ECO:0000305" key="2"/>
<sequence length="153" mass="17050">MARTGYSATIEGENVARAKANELPVSPKHSIEIARFIKNMTTTEAKAYLTDVVALKKAIPFKRFNRNVAHKRGLSKWPAGRYPVKAAEAYIRLLESVEKNAEYIGLDVENLRIDHAAANTGRGLRAFFPRAMGRATPKRRETVNIEIVVTEVA</sequence>
<proteinExistence type="inferred from homology"/>
<keyword id="KW-0687">Ribonucleoprotein</keyword>
<keyword id="KW-0689">Ribosomal protein</keyword>
<keyword id="KW-0694">RNA-binding</keyword>
<keyword id="KW-0699">rRNA-binding</keyword>
<dbReference type="EMBL" id="CP000562">
    <property type="protein sequence ID" value="ABN56502.1"/>
    <property type="molecule type" value="Genomic_DNA"/>
</dbReference>
<dbReference type="RefSeq" id="WP_011843412.1">
    <property type="nucleotide sequence ID" value="NC_009051.1"/>
</dbReference>
<dbReference type="SMR" id="A3CT02"/>
<dbReference type="STRING" id="368407.Memar_0569"/>
<dbReference type="GeneID" id="4848262"/>
<dbReference type="KEGG" id="mem:Memar_0569"/>
<dbReference type="eggNOG" id="arCOG04098">
    <property type="taxonomic scope" value="Archaea"/>
</dbReference>
<dbReference type="HOGENOM" id="CLU_083987_0_2_2"/>
<dbReference type="OrthoDB" id="314984at2157"/>
<dbReference type="Proteomes" id="UP000002146">
    <property type="component" value="Chromosome"/>
</dbReference>
<dbReference type="GO" id="GO:0022625">
    <property type="term" value="C:cytosolic large ribosomal subunit"/>
    <property type="evidence" value="ECO:0007669"/>
    <property type="project" value="TreeGrafter"/>
</dbReference>
<dbReference type="GO" id="GO:0019843">
    <property type="term" value="F:rRNA binding"/>
    <property type="evidence" value="ECO:0007669"/>
    <property type="project" value="UniProtKB-UniRule"/>
</dbReference>
<dbReference type="GO" id="GO:0003735">
    <property type="term" value="F:structural constituent of ribosome"/>
    <property type="evidence" value="ECO:0007669"/>
    <property type="project" value="InterPro"/>
</dbReference>
<dbReference type="GO" id="GO:0002181">
    <property type="term" value="P:cytoplasmic translation"/>
    <property type="evidence" value="ECO:0007669"/>
    <property type="project" value="TreeGrafter"/>
</dbReference>
<dbReference type="CDD" id="cd00336">
    <property type="entry name" value="Ribosomal_L22"/>
    <property type="match status" value="1"/>
</dbReference>
<dbReference type="Gene3D" id="3.90.470.10">
    <property type="entry name" value="Ribosomal protein L22/L17"/>
    <property type="match status" value="1"/>
</dbReference>
<dbReference type="HAMAP" id="MF_01331_A">
    <property type="entry name" value="Ribosomal_uL22_A"/>
    <property type="match status" value="1"/>
</dbReference>
<dbReference type="InterPro" id="IPR001063">
    <property type="entry name" value="Ribosomal_uL22"/>
</dbReference>
<dbReference type="InterPro" id="IPR018260">
    <property type="entry name" value="Ribosomal_uL22_CS"/>
</dbReference>
<dbReference type="InterPro" id="IPR005721">
    <property type="entry name" value="Ribosomal_uL22_euk/arc"/>
</dbReference>
<dbReference type="InterPro" id="IPR036394">
    <property type="entry name" value="Ribosomal_uL22_sf"/>
</dbReference>
<dbReference type="NCBIfam" id="NF003260">
    <property type="entry name" value="PRK04223.1"/>
    <property type="match status" value="1"/>
</dbReference>
<dbReference type="NCBIfam" id="TIGR01038">
    <property type="entry name" value="uL22_arch_euk"/>
    <property type="match status" value="1"/>
</dbReference>
<dbReference type="PANTHER" id="PTHR11593">
    <property type="entry name" value="60S RIBOSOMAL PROTEIN L17"/>
    <property type="match status" value="1"/>
</dbReference>
<dbReference type="PANTHER" id="PTHR11593:SF10">
    <property type="entry name" value="60S RIBOSOMAL PROTEIN L17"/>
    <property type="match status" value="1"/>
</dbReference>
<dbReference type="Pfam" id="PF00237">
    <property type="entry name" value="Ribosomal_L22"/>
    <property type="match status" value="1"/>
</dbReference>
<dbReference type="SUPFAM" id="SSF54843">
    <property type="entry name" value="Ribosomal protein L22"/>
    <property type="match status" value="1"/>
</dbReference>
<dbReference type="PROSITE" id="PS00464">
    <property type="entry name" value="RIBOSOMAL_L22"/>
    <property type="match status" value="1"/>
</dbReference>
<protein>
    <recommendedName>
        <fullName evidence="1">Large ribosomal subunit protein uL22</fullName>
    </recommendedName>
    <alternativeName>
        <fullName evidence="2">50S ribosomal protein L22</fullName>
    </alternativeName>
</protein>